<sequence length="281" mass="30294">MKQFSAKFALALSAAAGQALAASTQGISEDLYNRLVEMATISQAAYANMCNIPSTITVGEKIYNAQTDINGWVLRDDSTKEIITVFRGTGSDTNLQLDTNYTLTPFSTFSECSGCEVHGGYFIGWSSVQDQVMSLVKEQADQYPDYTLTVTGHSLGASMATLAAAQLSGTYDNITLYTFGEPRSGNEAFASYMNDKFTATSADTTKYFRVTHSNDGIPNLPPAEQGYVHGGVEYWSVDPYSAQNTYVCTGDEVQCCEAQGGQGVNDAHTTYFGMTSGACTW</sequence>
<keyword id="KW-0119">Carbohydrate metabolism</keyword>
<keyword id="KW-1015">Disulfide bond</keyword>
<keyword id="KW-0325">Glycoprotein</keyword>
<keyword id="KW-0378">Hydrolase</keyword>
<keyword id="KW-0624">Polysaccharide degradation</keyword>
<keyword id="KW-1185">Reference proteome</keyword>
<keyword id="KW-0964">Secreted</keyword>
<keyword id="KW-0719">Serine esterase</keyword>
<keyword id="KW-0732">Signal</keyword>
<keyword id="KW-0858">Xylan degradation</keyword>
<proteinExistence type="inferred from homology"/>
<dbReference type="EC" id="3.1.1.73"/>
<dbReference type="EMBL" id="CH476606">
    <property type="protein sequence ID" value="EAU31039.1"/>
    <property type="molecule type" value="Genomic_DNA"/>
</dbReference>
<dbReference type="RefSeq" id="XP_001217493.1">
    <property type="nucleotide sequence ID" value="XM_001217492.1"/>
</dbReference>
<dbReference type="SMR" id="Q0CBM7"/>
<dbReference type="STRING" id="341663.Q0CBM7"/>
<dbReference type="ESTHER" id="asptn-faea">
    <property type="family name" value="Lipase_3"/>
</dbReference>
<dbReference type="GlyCosmos" id="Q0CBM7">
    <property type="glycosylation" value="2 sites, No reported glycans"/>
</dbReference>
<dbReference type="EnsemblFungi" id="EAU31039">
    <property type="protein sequence ID" value="EAU31039"/>
    <property type="gene ID" value="ATEG_08907"/>
</dbReference>
<dbReference type="GeneID" id="4323090"/>
<dbReference type="VEuPathDB" id="FungiDB:ATEG_08907"/>
<dbReference type="eggNOG" id="KOG4569">
    <property type="taxonomic scope" value="Eukaryota"/>
</dbReference>
<dbReference type="HOGENOM" id="CLU_032957_1_1_1"/>
<dbReference type="OMA" id="ETDINGW"/>
<dbReference type="OrthoDB" id="426718at2759"/>
<dbReference type="BRENDA" id="3.1.1.73">
    <property type="organism ID" value="536"/>
</dbReference>
<dbReference type="Proteomes" id="UP000007963">
    <property type="component" value="Unassembled WGS sequence"/>
</dbReference>
<dbReference type="GO" id="GO:0005576">
    <property type="term" value="C:extracellular region"/>
    <property type="evidence" value="ECO:0007669"/>
    <property type="project" value="UniProtKB-SubCell"/>
</dbReference>
<dbReference type="GO" id="GO:0030600">
    <property type="term" value="F:feruloyl esterase activity"/>
    <property type="evidence" value="ECO:0007669"/>
    <property type="project" value="UniProtKB-EC"/>
</dbReference>
<dbReference type="GO" id="GO:0006629">
    <property type="term" value="P:lipid metabolic process"/>
    <property type="evidence" value="ECO:0007669"/>
    <property type="project" value="InterPro"/>
</dbReference>
<dbReference type="GO" id="GO:0045493">
    <property type="term" value="P:xylan catabolic process"/>
    <property type="evidence" value="ECO:0007669"/>
    <property type="project" value="UniProtKB-KW"/>
</dbReference>
<dbReference type="CDD" id="cd00519">
    <property type="entry name" value="Lipase_3"/>
    <property type="match status" value="1"/>
</dbReference>
<dbReference type="Gene3D" id="3.40.50.1820">
    <property type="entry name" value="alpha/beta hydrolase"/>
    <property type="match status" value="1"/>
</dbReference>
<dbReference type="InterPro" id="IPR029058">
    <property type="entry name" value="AB_hydrolase_fold"/>
</dbReference>
<dbReference type="InterPro" id="IPR051299">
    <property type="entry name" value="AB_hydrolase_lip/est"/>
</dbReference>
<dbReference type="InterPro" id="IPR002921">
    <property type="entry name" value="Fungal_lipase-type"/>
</dbReference>
<dbReference type="PANTHER" id="PTHR46640:SF1">
    <property type="entry name" value="FUNGAL LIPASE-LIKE DOMAIN-CONTAINING PROTEIN-RELATED"/>
    <property type="match status" value="1"/>
</dbReference>
<dbReference type="PANTHER" id="PTHR46640">
    <property type="entry name" value="TRIACYLGLYCEROL LIPASE, PUTATIVE (AFU_ORTHOLOGUE AFUA_6G06510)-RELATED"/>
    <property type="match status" value="1"/>
</dbReference>
<dbReference type="Pfam" id="PF01764">
    <property type="entry name" value="Lipase_3"/>
    <property type="match status" value="1"/>
</dbReference>
<dbReference type="SUPFAM" id="SSF53474">
    <property type="entry name" value="alpha/beta-Hydrolases"/>
    <property type="match status" value="1"/>
</dbReference>
<dbReference type="PROSITE" id="PS00120">
    <property type="entry name" value="LIPASE_SER"/>
    <property type="match status" value="1"/>
</dbReference>
<name>FAEA_ASPTN</name>
<evidence type="ECO:0000250" key="1"/>
<evidence type="ECO:0000250" key="2">
    <source>
        <dbReference type="UniProtKB" id="O42807"/>
    </source>
</evidence>
<evidence type="ECO:0000255" key="3"/>
<evidence type="ECO:0000305" key="4"/>
<organism>
    <name type="scientific">Aspergillus terreus (strain NIH 2624 / FGSC A1156)</name>
    <dbReference type="NCBI Taxonomy" id="341663"/>
    <lineage>
        <taxon>Eukaryota</taxon>
        <taxon>Fungi</taxon>
        <taxon>Dikarya</taxon>
        <taxon>Ascomycota</taxon>
        <taxon>Pezizomycotina</taxon>
        <taxon>Eurotiomycetes</taxon>
        <taxon>Eurotiomycetidae</taxon>
        <taxon>Eurotiales</taxon>
        <taxon>Aspergillaceae</taxon>
        <taxon>Aspergillus</taxon>
        <taxon>Aspergillus subgen. Circumdati</taxon>
    </lineage>
</organism>
<comment type="function">
    <text evidence="1">Involved in degradation of plant cell walls. Hydrolyzes the feruloyl-arabinose ester bond in arabinoxylans, and the feruloyl-galactose ester bond in pectin (By similarity).</text>
</comment>
<comment type="catalytic activity">
    <reaction>
        <text>feruloyl-polysaccharide + H2O = ferulate + polysaccharide.</text>
        <dbReference type="EC" id="3.1.1.73"/>
    </reaction>
</comment>
<comment type="subcellular location">
    <subcellularLocation>
        <location evidence="1">Secreted</location>
    </subcellularLocation>
</comment>
<comment type="similarity">
    <text evidence="4">Belongs to the AB hydrolase superfamily. FaeA family.</text>
</comment>
<accession>Q0CBM7</accession>
<feature type="signal peptide" evidence="3">
    <location>
        <begin position="1"/>
        <end position="21"/>
    </location>
</feature>
<feature type="chain" id="PRO_0000393495" description="Probable feruloyl esterase A">
    <location>
        <begin position="22"/>
        <end position="281"/>
    </location>
</feature>
<feature type="active site" description="Nucleophile" evidence="2">
    <location>
        <position position="154"/>
    </location>
</feature>
<feature type="active site" description="Charge relay system" evidence="2">
    <location>
        <position position="215"/>
    </location>
</feature>
<feature type="active site" description="Charge relay system" evidence="2">
    <location>
        <position position="268"/>
    </location>
</feature>
<feature type="binding site" evidence="2">
    <location>
        <position position="98"/>
    </location>
    <ligand>
        <name>substrate</name>
    </ligand>
</feature>
<feature type="binding site" evidence="2">
    <location>
        <position position="101"/>
    </location>
    <ligand>
        <name>substrate</name>
    </ligand>
</feature>
<feature type="binding site" evidence="2">
    <location>
        <position position="268"/>
    </location>
    <ligand>
        <name>substrate</name>
    </ligand>
</feature>
<feature type="glycosylation site" description="N-linked (GlcNAc...) asparagine" evidence="3">
    <location>
        <position position="100"/>
    </location>
</feature>
<feature type="glycosylation site" description="N-linked (GlcNAc...) asparagine" evidence="3">
    <location>
        <position position="173"/>
    </location>
</feature>
<feature type="disulfide bond" evidence="2">
    <location>
        <begin position="50"/>
        <end position="279"/>
    </location>
</feature>
<feature type="disulfide bond" evidence="2">
    <location>
        <begin position="112"/>
        <end position="115"/>
    </location>
</feature>
<feature type="disulfide bond" evidence="2">
    <location>
        <begin position="248"/>
        <end position="255"/>
    </location>
</feature>
<reference key="1">
    <citation type="submission" date="2005-09" db="EMBL/GenBank/DDBJ databases">
        <title>Annotation of the Aspergillus terreus NIH2624 genome.</title>
        <authorList>
            <person name="Birren B.W."/>
            <person name="Lander E.S."/>
            <person name="Galagan J.E."/>
            <person name="Nusbaum C."/>
            <person name="Devon K."/>
            <person name="Henn M."/>
            <person name="Ma L.-J."/>
            <person name="Jaffe D.B."/>
            <person name="Butler J."/>
            <person name="Alvarez P."/>
            <person name="Gnerre S."/>
            <person name="Grabherr M."/>
            <person name="Kleber M."/>
            <person name="Mauceli E.W."/>
            <person name="Brockman W."/>
            <person name="Rounsley S."/>
            <person name="Young S.K."/>
            <person name="LaButti K."/>
            <person name="Pushparaj V."/>
            <person name="DeCaprio D."/>
            <person name="Crawford M."/>
            <person name="Koehrsen M."/>
            <person name="Engels R."/>
            <person name="Montgomery P."/>
            <person name="Pearson M."/>
            <person name="Howarth C."/>
            <person name="Larson L."/>
            <person name="Luoma S."/>
            <person name="White J."/>
            <person name="Alvarado L."/>
            <person name="Kodira C.D."/>
            <person name="Zeng Q."/>
            <person name="Oleary S."/>
            <person name="Yandava C."/>
            <person name="Denning D.W."/>
            <person name="Nierman W.C."/>
            <person name="Milne T."/>
            <person name="Madden K."/>
        </authorList>
    </citation>
    <scope>NUCLEOTIDE SEQUENCE [LARGE SCALE GENOMIC DNA]</scope>
    <source>
        <strain>NIH 2624 / FGSC A1156</strain>
    </source>
</reference>
<gene>
    <name type="primary">faeA</name>
    <name type="ORF">ATEG_08907</name>
</gene>
<protein>
    <recommendedName>
        <fullName>Probable feruloyl esterase A</fullName>
        <ecNumber>3.1.1.73</ecNumber>
    </recommendedName>
    <alternativeName>
        <fullName>Ferulic acid esterase A</fullName>
    </alternativeName>
</protein>